<accession>C0JB07</accession>
<reference key="1">
    <citation type="journal article" date="2009" name="Mol. Biol. Evol.">
        <title>Molecular evolution, functional variation, and proposed nomenclature of the gene family that includes sphingomyelinase D in sicariid spider venoms.</title>
        <authorList>
            <person name="Binford G.J."/>
            <person name="Bodner M.R."/>
            <person name="Cordes M.H."/>
            <person name="Baldwin K.L."/>
            <person name="Rynerson M.R."/>
            <person name="Burns S.N."/>
            <person name="Zobel-Thropp P.A."/>
        </authorList>
    </citation>
    <scope>NUCLEOTIDE SEQUENCE [MRNA]</scope>
    <scope>NOMENCLATURE</scope>
    <source>
        <tissue>Venom gland</tissue>
    </source>
</reference>
<name>A21_LOXAP</name>
<comment type="function">
    <text evidence="1 3">Dermonecrotic toxins cleave the phosphodiester linkage between the phosphate and headgroup of certain phospholipids (sphingolipid and lysolipid substrates), forming an alcohol (often choline) and a cyclic phosphate (By similarity). This toxin acts on sphingomyelin (SM) (By similarity). It may also act on ceramide phosphoethanolamine (CPE), lysophosphatidylcholine (LPC) and lysophosphatidylethanolamine (LPE), but not on lysophosphatidylserine (LPS), and lysophosphatidylglycerol (LPG) (By similarity). It acts by transphosphatidylation, releasing exclusively cyclic phosphate products as second products (By similarity). Induces dermonecrosis, hemolysis, increased vascular permeability, edema, inflammatory response, and platelet aggregation (By similarity).</text>
</comment>
<comment type="catalytic activity">
    <reaction evidence="1">
        <text>an N-(acyl)-sphingosylphosphocholine = an N-(acyl)-sphingosyl-1,3-cyclic phosphate + choline</text>
        <dbReference type="Rhea" id="RHEA:60652"/>
        <dbReference type="ChEBI" id="CHEBI:15354"/>
        <dbReference type="ChEBI" id="CHEBI:64583"/>
        <dbReference type="ChEBI" id="CHEBI:143892"/>
    </reaction>
</comment>
<comment type="catalytic activity">
    <reaction evidence="1">
        <text>an N-(acyl)-sphingosylphosphoethanolamine = an N-(acyl)-sphingosyl-1,3-cyclic phosphate + ethanolamine</text>
        <dbReference type="Rhea" id="RHEA:60648"/>
        <dbReference type="ChEBI" id="CHEBI:57603"/>
        <dbReference type="ChEBI" id="CHEBI:143891"/>
        <dbReference type="ChEBI" id="CHEBI:143892"/>
    </reaction>
</comment>
<comment type="catalytic activity">
    <reaction evidence="1">
        <text>a 1-acyl-sn-glycero-3-phosphocholine = a 1-acyl-sn-glycero-2,3-cyclic phosphate + choline</text>
        <dbReference type="Rhea" id="RHEA:60700"/>
        <dbReference type="ChEBI" id="CHEBI:15354"/>
        <dbReference type="ChEBI" id="CHEBI:58168"/>
        <dbReference type="ChEBI" id="CHEBI:143947"/>
    </reaction>
</comment>
<comment type="catalytic activity">
    <reaction evidence="1">
        <text>a 1-acyl-sn-glycero-3-phosphoethanolamine = a 1-acyl-sn-glycero-2,3-cyclic phosphate + ethanolamine</text>
        <dbReference type="Rhea" id="RHEA:60704"/>
        <dbReference type="ChEBI" id="CHEBI:57603"/>
        <dbReference type="ChEBI" id="CHEBI:64381"/>
        <dbReference type="ChEBI" id="CHEBI:143947"/>
    </reaction>
</comment>
<comment type="cofactor">
    <cofactor evidence="5">
        <name>Mg(2+)</name>
        <dbReference type="ChEBI" id="CHEBI:18420"/>
    </cofactor>
    <text evidence="5">Binds 1 Mg(2+) ion per subunit.</text>
</comment>
<comment type="subcellular location">
    <subcellularLocation>
        <location evidence="8">Secreted</location>
    </subcellularLocation>
</comment>
<comment type="tissue specificity">
    <text evidence="8">Expressed by the venom gland.</text>
</comment>
<comment type="similarity">
    <text evidence="7">Belongs to the arthropod phospholipase D family. Class II subfamily.</text>
</comment>
<comment type="caution">
    <text evidence="1 2 4">The most common activity assay for dermonecrotic toxins detects enzymatic activity by monitoring choline release from substrate. Liberation of choline from sphingomyelin (SM) or lysophosphatidylcholine (LPC) is commonly assumed to result from substrate hydrolysis, giving either ceramide-1-phosphate (C1P) or lysophosphatidic acid (LPA), respectively, as a second product. However, two studies from Lajoie and colleagues (2013 and 2015) report the observation of exclusive formation of cyclic phosphate products as second products, resulting from intramolecular transphosphatidylation. Cyclic phosphates have vastly different biological properties from their monoester counterparts, and they may be relevant to the pathology of brown spider envenomation.</text>
</comment>
<evidence type="ECO:0000250" key="1">
    <source>
        <dbReference type="UniProtKB" id="A0A0D4WTV1"/>
    </source>
</evidence>
<evidence type="ECO:0000250" key="2">
    <source>
        <dbReference type="UniProtKB" id="A0A0D4WV12"/>
    </source>
</evidence>
<evidence type="ECO:0000250" key="3">
    <source>
        <dbReference type="UniProtKB" id="P0CE80"/>
    </source>
</evidence>
<evidence type="ECO:0000250" key="4">
    <source>
        <dbReference type="UniProtKB" id="Q4ZFU2"/>
    </source>
</evidence>
<evidence type="ECO:0000250" key="5">
    <source>
        <dbReference type="UniProtKB" id="Q8I914"/>
    </source>
</evidence>
<evidence type="ECO:0000303" key="6">
    <source>
    </source>
</evidence>
<evidence type="ECO:0000305" key="7"/>
<evidence type="ECO:0000305" key="8">
    <source>
    </source>
</evidence>
<keyword id="KW-0204">Cytolysis</keyword>
<keyword id="KW-1061">Dermonecrotic toxin</keyword>
<keyword id="KW-1015">Disulfide bond</keyword>
<keyword id="KW-0354">Hemolysis</keyword>
<keyword id="KW-0442">Lipid degradation</keyword>
<keyword id="KW-0443">Lipid metabolism</keyword>
<keyword id="KW-0456">Lyase</keyword>
<keyword id="KW-0460">Magnesium</keyword>
<keyword id="KW-0479">Metal-binding</keyword>
<keyword id="KW-0964">Secreted</keyword>
<keyword id="KW-0800">Toxin</keyword>
<organism>
    <name type="scientific">Loxosceles apachea</name>
    <name type="common">Apache recluse spider</name>
    <dbReference type="NCBI Taxonomy" id="571518"/>
    <lineage>
        <taxon>Eukaryota</taxon>
        <taxon>Metazoa</taxon>
        <taxon>Ecdysozoa</taxon>
        <taxon>Arthropoda</taxon>
        <taxon>Chelicerata</taxon>
        <taxon>Arachnida</taxon>
        <taxon>Araneae</taxon>
        <taxon>Araneomorphae</taxon>
        <taxon>Haplogynae</taxon>
        <taxon>Scytodoidea</taxon>
        <taxon>Sicariidae</taxon>
        <taxon>Loxosceles</taxon>
    </lineage>
</organism>
<protein>
    <recommendedName>
        <fullName evidence="6">Dermonecrotic toxin LapSicTox-alphaII1</fullName>
        <ecNumber evidence="4">4.6.1.-</ecNumber>
    </recommendedName>
    <alternativeName>
        <fullName>Phospholipase D</fullName>
        <shortName>PLD</shortName>
    </alternativeName>
    <alternativeName>
        <fullName>Sphingomyelin phosphodiesterase D</fullName>
        <shortName>SMD</shortName>
        <shortName>SMase D</shortName>
        <shortName>Sphingomyelinase D</shortName>
    </alternativeName>
</protein>
<sequence length="273" mass="31213">WIMGHMVNAIYQIQEFVSLGANSIEFDINFDTDANPIYTYHGVPCDCFRSCLHYEYISDFLKALREHTLPGNPKYKENLVLFVFDLKTNSLYDSQAYTAGQKLAENIFQYYWANGEGMPVSGYLVISIPNLQHYDLIKGFRETIKAKGHNELLDRVGYDFSANDNIPDVENAYKKVGVVNHVWQSDGITNCISRGLTRAKEAVSERDGGGVINKVYVWTIDKYQSMRDALDANVDGIMTNYPNILVEVLKEDAYKDRFRLAKNYDDPFVTFEG</sequence>
<dbReference type="EC" id="4.6.1.-" evidence="4"/>
<dbReference type="EMBL" id="FJ171442">
    <property type="protein sequence ID" value="ACN48938.1"/>
    <property type="molecule type" value="mRNA"/>
</dbReference>
<dbReference type="SMR" id="C0JB07"/>
<dbReference type="GO" id="GO:0005576">
    <property type="term" value="C:extracellular region"/>
    <property type="evidence" value="ECO:0007669"/>
    <property type="project" value="UniProtKB-SubCell"/>
</dbReference>
<dbReference type="GO" id="GO:0016829">
    <property type="term" value="F:lyase activity"/>
    <property type="evidence" value="ECO:0007669"/>
    <property type="project" value="UniProtKB-KW"/>
</dbReference>
<dbReference type="GO" id="GO:0046872">
    <property type="term" value="F:metal ion binding"/>
    <property type="evidence" value="ECO:0007669"/>
    <property type="project" value="UniProtKB-KW"/>
</dbReference>
<dbReference type="GO" id="GO:0008081">
    <property type="term" value="F:phosphoric diester hydrolase activity"/>
    <property type="evidence" value="ECO:0007669"/>
    <property type="project" value="InterPro"/>
</dbReference>
<dbReference type="GO" id="GO:0090729">
    <property type="term" value="F:toxin activity"/>
    <property type="evidence" value="ECO:0007669"/>
    <property type="project" value="UniProtKB-KW"/>
</dbReference>
<dbReference type="GO" id="GO:0031640">
    <property type="term" value="P:killing of cells of another organism"/>
    <property type="evidence" value="ECO:0007669"/>
    <property type="project" value="UniProtKB-KW"/>
</dbReference>
<dbReference type="GO" id="GO:0016042">
    <property type="term" value="P:lipid catabolic process"/>
    <property type="evidence" value="ECO:0007669"/>
    <property type="project" value="UniProtKB-KW"/>
</dbReference>
<dbReference type="CDD" id="cd08576">
    <property type="entry name" value="GDPD_like_SMaseD_PLD"/>
    <property type="match status" value="1"/>
</dbReference>
<dbReference type="Gene3D" id="3.20.20.190">
    <property type="entry name" value="Phosphatidylinositol (PI) phosphodiesterase"/>
    <property type="match status" value="1"/>
</dbReference>
<dbReference type="InterPro" id="IPR017946">
    <property type="entry name" value="PLC-like_Pdiesterase_TIM-brl"/>
</dbReference>
<dbReference type="Pfam" id="PF13653">
    <property type="entry name" value="GDPD_2"/>
    <property type="match status" value="1"/>
</dbReference>
<dbReference type="SUPFAM" id="SSF51695">
    <property type="entry name" value="PLC-like phosphodiesterases"/>
    <property type="match status" value="1"/>
</dbReference>
<feature type="chain" id="PRO_0000392820" description="Dermonecrotic toxin LapSicTox-alphaII1">
    <location>
        <begin position="1" status="less than"/>
        <end position="273"/>
    </location>
</feature>
<feature type="active site" evidence="5">
    <location>
        <position position="5"/>
    </location>
</feature>
<feature type="active site" description="Nucleophile" evidence="5">
    <location>
        <position position="41"/>
    </location>
</feature>
<feature type="binding site" evidence="5">
    <location>
        <position position="25"/>
    </location>
    <ligand>
        <name>Mg(2+)</name>
        <dbReference type="ChEBI" id="CHEBI:18420"/>
    </ligand>
</feature>
<feature type="binding site" evidence="5">
    <location>
        <position position="27"/>
    </location>
    <ligand>
        <name>Mg(2+)</name>
        <dbReference type="ChEBI" id="CHEBI:18420"/>
    </ligand>
</feature>
<feature type="binding site" evidence="5">
    <location>
        <position position="85"/>
    </location>
    <ligand>
        <name>Mg(2+)</name>
        <dbReference type="ChEBI" id="CHEBI:18420"/>
    </ligand>
</feature>
<feature type="disulfide bond" evidence="3">
    <location>
        <begin position="45"/>
        <end position="51"/>
    </location>
</feature>
<feature type="disulfide bond" evidence="3">
    <location>
        <begin position="47"/>
        <end position="191"/>
    </location>
</feature>
<feature type="non-terminal residue">
    <location>
        <position position="1"/>
    </location>
</feature>
<proteinExistence type="evidence at transcript level"/>